<protein>
    <recommendedName>
        <fullName evidence="1">Sec-independent protein translocase protein TatA</fullName>
    </recommendedName>
</protein>
<proteinExistence type="inferred from homology"/>
<keyword id="KW-0997">Cell inner membrane</keyword>
<keyword id="KW-1003">Cell membrane</keyword>
<keyword id="KW-0472">Membrane</keyword>
<keyword id="KW-0653">Protein transport</keyword>
<keyword id="KW-1185">Reference proteome</keyword>
<keyword id="KW-0811">Translocation</keyword>
<keyword id="KW-0812">Transmembrane</keyword>
<keyword id="KW-1133">Transmembrane helix</keyword>
<keyword id="KW-0813">Transport</keyword>
<evidence type="ECO:0000255" key="1">
    <source>
        <dbReference type="HAMAP-Rule" id="MF_00236"/>
    </source>
</evidence>
<dbReference type="EMBL" id="CP000492">
    <property type="protein sequence ID" value="ABL64633.1"/>
    <property type="molecule type" value="Genomic_DNA"/>
</dbReference>
<dbReference type="RefSeq" id="WP_011744466.1">
    <property type="nucleotide sequence ID" value="NC_008639.1"/>
</dbReference>
<dbReference type="SMR" id="A1BE06"/>
<dbReference type="STRING" id="290317.Cpha266_0577"/>
<dbReference type="KEGG" id="cph:Cpha266_0577"/>
<dbReference type="eggNOG" id="COG1826">
    <property type="taxonomic scope" value="Bacteria"/>
</dbReference>
<dbReference type="HOGENOM" id="CLU_086034_6_2_10"/>
<dbReference type="Proteomes" id="UP000008701">
    <property type="component" value="Chromosome"/>
</dbReference>
<dbReference type="GO" id="GO:0033281">
    <property type="term" value="C:TAT protein transport complex"/>
    <property type="evidence" value="ECO:0007669"/>
    <property type="project" value="UniProtKB-UniRule"/>
</dbReference>
<dbReference type="GO" id="GO:0008320">
    <property type="term" value="F:protein transmembrane transporter activity"/>
    <property type="evidence" value="ECO:0007669"/>
    <property type="project" value="UniProtKB-UniRule"/>
</dbReference>
<dbReference type="GO" id="GO:0043953">
    <property type="term" value="P:protein transport by the Tat complex"/>
    <property type="evidence" value="ECO:0007669"/>
    <property type="project" value="UniProtKB-UniRule"/>
</dbReference>
<dbReference type="Gene3D" id="1.20.5.3310">
    <property type="match status" value="1"/>
</dbReference>
<dbReference type="HAMAP" id="MF_00236">
    <property type="entry name" value="TatA_E"/>
    <property type="match status" value="1"/>
</dbReference>
<dbReference type="InterPro" id="IPR003369">
    <property type="entry name" value="TatA/B/E"/>
</dbReference>
<dbReference type="InterPro" id="IPR006312">
    <property type="entry name" value="TatA/E"/>
</dbReference>
<dbReference type="NCBIfam" id="TIGR01411">
    <property type="entry name" value="tatAE"/>
    <property type="match status" value="1"/>
</dbReference>
<dbReference type="PANTHER" id="PTHR42982">
    <property type="entry name" value="SEC-INDEPENDENT PROTEIN TRANSLOCASE PROTEIN TATA"/>
    <property type="match status" value="1"/>
</dbReference>
<dbReference type="PANTHER" id="PTHR42982:SF1">
    <property type="entry name" value="SEC-INDEPENDENT PROTEIN TRANSLOCASE PROTEIN TATA"/>
    <property type="match status" value="1"/>
</dbReference>
<dbReference type="Pfam" id="PF02416">
    <property type="entry name" value="TatA_B_E"/>
    <property type="match status" value="1"/>
</dbReference>
<dbReference type="PRINTS" id="PR01506">
    <property type="entry name" value="TATBPROTEIN"/>
</dbReference>
<name>TATA_CHLPD</name>
<gene>
    <name evidence="1" type="primary">tatA</name>
    <name type="ordered locus">Cpha266_0577</name>
</gene>
<sequence>MFGLGGQELVLILLIILLLFGAKKLPELARGLGRGMKEFKKAQTEIEEEFNKVVEEPPAKEKTTT</sequence>
<comment type="function">
    <text evidence="1">Part of the twin-arginine translocation (Tat) system that transports large folded proteins containing a characteristic twin-arginine motif in their signal peptide across membranes. TatA could form the protein-conducting channel of the Tat system.</text>
</comment>
<comment type="subunit">
    <text evidence="1">Forms a complex with TatC.</text>
</comment>
<comment type="subcellular location">
    <subcellularLocation>
        <location evidence="1">Cell inner membrane</location>
        <topology evidence="1">Single-pass membrane protein</topology>
    </subcellularLocation>
</comment>
<comment type="similarity">
    <text evidence="1">Belongs to the TatA/E family.</text>
</comment>
<reference key="1">
    <citation type="submission" date="2006-12" db="EMBL/GenBank/DDBJ databases">
        <title>Complete sequence of Chlorobium phaeobacteroides DSM 266.</title>
        <authorList>
            <consortium name="US DOE Joint Genome Institute"/>
            <person name="Copeland A."/>
            <person name="Lucas S."/>
            <person name="Lapidus A."/>
            <person name="Barry K."/>
            <person name="Detter J.C."/>
            <person name="Glavina del Rio T."/>
            <person name="Hammon N."/>
            <person name="Israni S."/>
            <person name="Pitluck S."/>
            <person name="Goltsman E."/>
            <person name="Schmutz J."/>
            <person name="Larimer F."/>
            <person name="Land M."/>
            <person name="Hauser L."/>
            <person name="Mikhailova N."/>
            <person name="Li T."/>
            <person name="Overmann J."/>
            <person name="Bryant D.A."/>
            <person name="Richardson P."/>
        </authorList>
    </citation>
    <scope>NUCLEOTIDE SEQUENCE [LARGE SCALE GENOMIC DNA]</scope>
    <source>
        <strain>DSM 266 / SMG 266 / 2430</strain>
    </source>
</reference>
<organism>
    <name type="scientific">Chlorobium phaeobacteroides (strain DSM 266 / SMG 266 / 2430)</name>
    <dbReference type="NCBI Taxonomy" id="290317"/>
    <lineage>
        <taxon>Bacteria</taxon>
        <taxon>Pseudomonadati</taxon>
        <taxon>Chlorobiota</taxon>
        <taxon>Chlorobiia</taxon>
        <taxon>Chlorobiales</taxon>
        <taxon>Chlorobiaceae</taxon>
        <taxon>Chlorobium/Pelodictyon group</taxon>
        <taxon>Chlorobium</taxon>
    </lineage>
</organism>
<feature type="chain" id="PRO_1000078303" description="Sec-independent protein translocase protein TatA">
    <location>
        <begin position="1"/>
        <end position="65"/>
    </location>
</feature>
<feature type="transmembrane region" description="Helical" evidence="1">
    <location>
        <begin position="1"/>
        <end position="21"/>
    </location>
</feature>
<accession>A1BE06</accession>